<protein>
    <recommendedName>
        <fullName evidence="17">Auxin efflux carrier component 1</fullName>
    </recommendedName>
    <alternativeName>
        <fullName evidence="17">Protein PIN-FORMED</fullName>
        <shortName evidence="17">AtPIN1</shortName>
    </alternativeName>
</protein>
<gene>
    <name evidence="17" type="primary">PIN1</name>
    <name evidence="20" type="ordered locus">At1g73590</name>
    <name evidence="21" type="ORF">F6D5.2</name>
</gene>
<reference key="1">
    <citation type="journal article" date="1998" name="Science">
        <title>Regulation of polar auxin transport by AtPIN1 in Arabidopsis vascular tissue.</title>
        <authorList>
            <person name="Gaelweiler L."/>
            <person name="Guan C."/>
            <person name="Mueller A."/>
            <person name="Wisman E."/>
            <person name="Mendgen K."/>
            <person name="Yephremov A."/>
            <person name="Palme K."/>
        </authorList>
    </citation>
    <scope>NUCLEOTIDE SEQUENCE [GENOMIC DNA / MRNA]</scope>
    <scope>DISRUPTION PHENOTYPE</scope>
    <source>
        <strain>cv. Columbia</strain>
    </source>
</reference>
<reference key="2">
    <citation type="journal article" date="2000" name="Nature">
        <title>Sequence and analysis of chromosome 1 of the plant Arabidopsis thaliana.</title>
        <authorList>
            <person name="Theologis A."/>
            <person name="Ecker J.R."/>
            <person name="Palm C.J."/>
            <person name="Federspiel N.A."/>
            <person name="Kaul S."/>
            <person name="White O."/>
            <person name="Alonso J."/>
            <person name="Altafi H."/>
            <person name="Araujo R."/>
            <person name="Bowman C.L."/>
            <person name="Brooks S.Y."/>
            <person name="Buehler E."/>
            <person name="Chan A."/>
            <person name="Chao Q."/>
            <person name="Chen H."/>
            <person name="Cheuk R.F."/>
            <person name="Chin C.W."/>
            <person name="Chung M.K."/>
            <person name="Conn L."/>
            <person name="Conway A.B."/>
            <person name="Conway A.R."/>
            <person name="Creasy T.H."/>
            <person name="Dewar K."/>
            <person name="Dunn P."/>
            <person name="Etgu P."/>
            <person name="Feldblyum T.V."/>
            <person name="Feng J.-D."/>
            <person name="Fong B."/>
            <person name="Fujii C.Y."/>
            <person name="Gill J.E."/>
            <person name="Goldsmith A.D."/>
            <person name="Haas B."/>
            <person name="Hansen N.F."/>
            <person name="Hughes B."/>
            <person name="Huizar L."/>
            <person name="Hunter J.L."/>
            <person name="Jenkins J."/>
            <person name="Johnson-Hopson C."/>
            <person name="Khan S."/>
            <person name="Khaykin E."/>
            <person name="Kim C.J."/>
            <person name="Koo H.L."/>
            <person name="Kremenetskaia I."/>
            <person name="Kurtz D.B."/>
            <person name="Kwan A."/>
            <person name="Lam B."/>
            <person name="Langin-Hooper S."/>
            <person name="Lee A."/>
            <person name="Lee J.M."/>
            <person name="Lenz C.A."/>
            <person name="Li J.H."/>
            <person name="Li Y.-P."/>
            <person name="Lin X."/>
            <person name="Liu S.X."/>
            <person name="Liu Z.A."/>
            <person name="Luros J.S."/>
            <person name="Maiti R."/>
            <person name="Marziali A."/>
            <person name="Militscher J."/>
            <person name="Miranda M."/>
            <person name="Nguyen M."/>
            <person name="Nierman W.C."/>
            <person name="Osborne B.I."/>
            <person name="Pai G."/>
            <person name="Peterson J."/>
            <person name="Pham P.K."/>
            <person name="Rizzo M."/>
            <person name="Rooney T."/>
            <person name="Rowley D."/>
            <person name="Sakano H."/>
            <person name="Salzberg S.L."/>
            <person name="Schwartz J.R."/>
            <person name="Shinn P."/>
            <person name="Southwick A.M."/>
            <person name="Sun H."/>
            <person name="Tallon L.J."/>
            <person name="Tambunga G."/>
            <person name="Toriumi M.J."/>
            <person name="Town C.D."/>
            <person name="Utterback T."/>
            <person name="Van Aken S."/>
            <person name="Vaysberg M."/>
            <person name="Vysotskaia V.S."/>
            <person name="Walker M."/>
            <person name="Wu D."/>
            <person name="Yu G."/>
            <person name="Fraser C.M."/>
            <person name="Venter J.C."/>
            <person name="Davis R.W."/>
        </authorList>
    </citation>
    <scope>NUCLEOTIDE SEQUENCE [LARGE SCALE GENOMIC DNA]</scope>
    <source>
        <strain>cv. Columbia</strain>
    </source>
</reference>
<reference key="3">
    <citation type="journal article" date="2017" name="Plant J.">
        <title>Araport11: a complete reannotation of the Arabidopsis thaliana reference genome.</title>
        <authorList>
            <person name="Cheng C.Y."/>
            <person name="Krishnakumar V."/>
            <person name="Chan A.P."/>
            <person name="Thibaud-Nissen F."/>
            <person name="Schobel S."/>
            <person name="Town C.D."/>
        </authorList>
    </citation>
    <scope>GENOME REANNOTATION</scope>
    <source>
        <strain>cv. Columbia</strain>
    </source>
</reference>
<reference key="4">
    <citation type="journal article" date="2003" name="Science">
        <title>Empirical analysis of transcriptional activity in the Arabidopsis genome.</title>
        <authorList>
            <person name="Yamada K."/>
            <person name="Lim J."/>
            <person name="Dale J.M."/>
            <person name="Chen H."/>
            <person name="Shinn P."/>
            <person name="Palm C.J."/>
            <person name="Southwick A.M."/>
            <person name="Wu H.C."/>
            <person name="Kim C.J."/>
            <person name="Nguyen M."/>
            <person name="Pham P.K."/>
            <person name="Cheuk R.F."/>
            <person name="Karlin-Newmann G."/>
            <person name="Liu S.X."/>
            <person name="Lam B."/>
            <person name="Sakano H."/>
            <person name="Wu T."/>
            <person name="Yu G."/>
            <person name="Miranda M."/>
            <person name="Quach H.L."/>
            <person name="Tripp M."/>
            <person name="Chang C.H."/>
            <person name="Lee J.M."/>
            <person name="Toriumi M.J."/>
            <person name="Chan M.M."/>
            <person name="Tang C.C."/>
            <person name="Onodera C.S."/>
            <person name="Deng J.M."/>
            <person name="Akiyama K."/>
            <person name="Ansari Y."/>
            <person name="Arakawa T."/>
            <person name="Banh J."/>
            <person name="Banno F."/>
            <person name="Bowser L."/>
            <person name="Brooks S.Y."/>
            <person name="Carninci P."/>
            <person name="Chao Q."/>
            <person name="Choy N."/>
            <person name="Enju A."/>
            <person name="Goldsmith A.D."/>
            <person name="Gurjal M."/>
            <person name="Hansen N.F."/>
            <person name="Hayashizaki Y."/>
            <person name="Johnson-Hopson C."/>
            <person name="Hsuan V.W."/>
            <person name="Iida K."/>
            <person name="Karnes M."/>
            <person name="Khan S."/>
            <person name="Koesema E."/>
            <person name="Ishida J."/>
            <person name="Jiang P.X."/>
            <person name="Jones T."/>
            <person name="Kawai J."/>
            <person name="Kamiya A."/>
            <person name="Meyers C."/>
            <person name="Nakajima M."/>
            <person name="Narusaka M."/>
            <person name="Seki M."/>
            <person name="Sakurai T."/>
            <person name="Satou M."/>
            <person name="Tamse R."/>
            <person name="Vaysberg M."/>
            <person name="Wallender E.K."/>
            <person name="Wong C."/>
            <person name="Yamamura Y."/>
            <person name="Yuan S."/>
            <person name="Shinozaki K."/>
            <person name="Davis R.W."/>
            <person name="Theologis A."/>
            <person name="Ecker J.R."/>
        </authorList>
    </citation>
    <scope>NUCLEOTIDE SEQUENCE [LARGE SCALE MRNA]</scope>
    <source>
        <strain>cv. Columbia</strain>
    </source>
</reference>
<reference key="5">
    <citation type="journal article" date="1999" name="Science">
        <title>Coordinated polar localization of auxin efflux carrier PIN1 by GNOM ARF GEF.</title>
        <authorList>
            <person name="Steinmann T."/>
            <person name="Geldner N."/>
            <person name="Grebe M."/>
            <person name="Mangold S."/>
            <person name="Jackson C.L."/>
            <person name="Paris S."/>
            <person name="Gaelweiler L."/>
            <person name="Palme K."/>
            <person name="Juergens G."/>
        </authorList>
    </citation>
    <scope>POLAR LOCALIZATION</scope>
</reference>
<reference key="6">
    <citation type="journal article" date="2001" name="Nature">
        <title>Auxin transport inhibitors block PIN1 cycling and vesicle trafficking.</title>
        <authorList>
            <person name="Geldner N."/>
            <person name="Friml J."/>
            <person name="Stierhof Y.-D."/>
            <person name="Juergens G."/>
            <person name="Palme K."/>
        </authorList>
    </citation>
    <scope>PIN1 CYCLING</scope>
</reference>
<reference key="7">
    <citation type="journal article" date="2003" name="Nature">
        <title>Efflux-dependent auxin gradients establish the apical-basal axis of Arabidopsis.</title>
        <authorList>
            <person name="Friml J."/>
            <person name="Vieten A."/>
            <person name="Sauer M."/>
            <person name="Weijers D."/>
            <person name="Schwarz H."/>
            <person name="Hamann T."/>
            <person name="Offringa R."/>
            <person name="Juergens G."/>
        </authorList>
    </citation>
    <scope>DEVELOPMENTAL STAGE</scope>
</reference>
<reference key="8">
    <citation type="journal article" date="2003" name="Cell">
        <title>Local, efflux-dependent auxin gradients as a common module for plant organ formation.</title>
        <authorList>
            <person name="Benkova E."/>
            <person name="Michniewicz M."/>
            <person name="Sauer M."/>
            <person name="Teichmann T."/>
            <person name="Seifertova D."/>
            <person name="Juergens G."/>
            <person name="Friml J."/>
        </authorList>
    </citation>
    <scope>FUNCTION</scope>
</reference>
<reference key="9">
    <citation type="journal article" date="2005" name="Trends Plant Sci.">
        <title>The PIN auxin efflux facilitators: evolutionary and functional perspectives.</title>
        <authorList>
            <person name="Paponov I.A."/>
            <person name="Teale W.D."/>
            <person name="Trebar M."/>
            <person name="Blilou I."/>
            <person name="Palme K."/>
        </authorList>
    </citation>
    <scope>GENE FAMILY</scope>
    <scope>NOMENCLATURE</scope>
</reference>
<reference key="10">
    <citation type="journal article" date="2010" name="Plant Cell">
        <title>Phosphorylation of conserved PIN motifs directs Arabidopsis PIN1 polarity and auxin transport.</title>
        <authorList>
            <person name="Huang F."/>
            <person name="Zago M.K."/>
            <person name="Abas L."/>
            <person name="van Marion A."/>
            <person name="Galvan-Ampudia C.S."/>
            <person name="Offringa R."/>
        </authorList>
    </citation>
    <scope>FUNCTION</scope>
    <scope>PHOSPHORYLATION AT SER-231; SER-252 AND SER-290</scope>
    <scope>MUTAGENESIS OF SER-231; SER-252 AND SER-290</scope>
</reference>
<reference key="11">
    <citation type="journal article" date="2010" name="Plant Physiol.">
        <title>Differential auxin-transporting activities of PIN-FORMED proteins in Arabidopsis root hair cells.</title>
        <authorList>
            <person name="Ganguly A."/>
            <person name="Lee S.H."/>
            <person name="Cho M."/>
            <person name="Lee O.R."/>
            <person name="Yoo H."/>
            <person name="Cho H.T."/>
        </authorList>
    </citation>
    <scope>SUBCELLULAR LOCATION</scope>
    <scope>FUNCTION</scope>
</reference>
<reference key="12">
    <citation type="journal article" date="2010" name="Proc. Natl. Acad. Sci. U.S.A.">
        <title>PIN phosphorylation is sufficient to mediate PIN polarity and direct auxin transport.</title>
        <authorList>
            <person name="Zhang J."/>
            <person name="Nodzynski T."/>
            <person name="Pencik A."/>
            <person name="Rolcik J."/>
            <person name="Friml J."/>
        </authorList>
    </citation>
    <scope>PHOSPHORYLATION AT SER-337 AND THR-340</scope>
</reference>
<reference key="13">
    <citation type="journal article" date="2012" name="Plant Cell">
        <title>A PP6-type phosphatase holoenzyme directly regulates PIN phosphorylation and auxin efflux in Arabidopsis.</title>
        <authorList>
            <person name="Dai M."/>
            <person name="Zhang C."/>
            <person name="Kania U."/>
            <person name="Chen F."/>
            <person name="Xue Q."/>
            <person name="McCray T."/>
            <person name="Li G."/>
            <person name="Qin G."/>
            <person name="Wakeley M."/>
            <person name="Terzaghi W."/>
            <person name="Wan J."/>
            <person name="Zhao Y."/>
            <person name="Xu J."/>
            <person name="Friml J."/>
            <person name="Deng X.W."/>
            <person name="Wang H."/>
        </authorList>
    </citation>
    <scope>INTERACTION WITH FYPP1 AND FYPP3</scope>
</reference>
<reference key="14">
    <citation type="journal article" date="2013" name="PLoS Genet.">
        <title>Patterning of leaf vein networks by convergent auxin transport pathways.</title>
        <authorList>
            <person name="Sawchuk M.G."/>
            <person name="Edgar A."/>
            <person name="Scarpella E."/>
        </authorList>
    </citation>
    <scope>FUNCTION</scope>
</reference>
<reference key="15">
    <citation type="journal article" date="2014" name="Plant J.">
        <title>Inter-regulation of the unfolded protein response and auxin signaling.</title>
        <authorList>
            <person name="Chen Y."/>
            <person name="Aung K."/>
            <person name="Rolcik J."/>
            <person name="Walicki K."/>
            <person name="Friml J."/>
            <person name="Brandizzi F."/>
        </authorList>
    </citation>
    <scope>INDUCTION</scope>
</reference>
<reference key="16">
    <citation type="journal article" date="2015" name="Plant Physiol.">
        <title>TYPE-ONE PROTEIN PHOSPHATASE4 regulates pavement cell interdigitation by modulating PIN-FORMED1 polarity and trafficking in Arabidopsis.</title>
        <authorList>
            <person name="Guo X."/>
            <person name="Qin Q."/>
            <person name="Yan J."/>
            <person name="Niu Y."/>
            <person name="Huang B."/>
            <person name="Guan L."/>
            <person name="Li Y."/>
            <person name="Ren D."/>
            <person name="Li J."/>
            <person name="Hou S."/>
        </authorList>
    </citation>
    <scope>INTERACTION WITH TOPP4</scope>
</reference>
<reference key="17">
    <citation type="journal article" date="2021" name="Curr. Biol.">
        <title>AGC kinases and MAB4/MEL proteins maintain PIN polarity by limiting lateral diffusion in plant cells.</title>
        <authorList>
            <person name="Glanc M."/>
            <person name="Van Gelderen K."/>
            <person name="Hoermayer L."/>
            <person name="Tan S."/>
            <person name="Naramoto S."/>
            <person name="Zhang X."/>
            <person name="Domjan D."/>
            <person name="Vcelarova L."/>
            <person name="Hauschild R."/>
            <person name="Johnson A."/>
            <person name="de Koning E."/>
            <person name="van Dop M."/>
            <person name="Rademacher E."/>
            <person name="Janson S."/>
            <person name="Wei X."/>
            <person name="Molnar G."/>
            <person name="Fendrych M."/>
            <person name="De Rybel B."/>
            <person name="Offringa R."/>
            <person name="Friml J."/>
        </authorList>
    </citation>
    <scope>FUNCTION</scope>
    <scope>MUTAGENESIS OF SER-231; SER-252 AND SER-290</scope>
    <scope>SUBUNIT</scope>
    <scope>INTERACTION WITH NPY5/MEL1</scope>
    <scope>SUBCELLULAR LOCATION</scope>
    <source>
        <strain>cv. Columbia</strain>
    </source>
</reference>
<reference evidence="22 23 24" key="18">
    <citation type="journal article" date="2022" name="Nature">
        <title>Structural insights into auxin recognition and efflux by Arabidopsis PIN1.</title>
        <authorList>
            <person name="Yang Z."/>
            <person name="Xia J."/>
            <person name="Hong J."/>
            <person name="Zhang C."/>
            <person name="Wei H."/>
            <person name="Ying W."/>
            <person name="Sun C."/>
            <person name="Sun L."/>
            <person name="Mao Y."/>
            <person name="Gao Y."/>
            <person name="Tan S."/>
            <person name="Friml J."/>
            <person name="Li D."/>
            <person name="Liu X."/>
            <person name="Sun L."/>
        </authorList>
    </citation>
    <scope>STRUCTURE BY ELECTRON MICROSCOPY (3.10 ANGSTROMS) IN COMPLEX WITH AUXIN AND AUXIN TRANSPORT INHIBITOR</scope>
    <scope>FUNCTION</scope>
    <scope>ACTIVITY REGULATION</scope>
    <scope>PHOSPHORYLATION AT SER-209; SER-212; SER-221; SER-225; THR-227; SER-231; THR-248; SER-252; SER-253; SER-271; THR-286; SER-290; THR-302; SER-317; SER-320; SER-337; SER-374; SER-408; SER-414; SER-426; SER-434 AND SER-446</scope>
    <scope>MUTAGENESIS OF VAL-51; ASN-112; TYR-145; ARG-187; THR-227; SER-231; THR-248; SER-252; SER-271; THR-286; SER-290; LYS-472; ARG-547; GLN-580 AND ILE-582</scope>
    <scope>HOMODIMERIZATION</scope>
</reference>
<dbReference type="EMBL" id="AF089084">
    <property type="protein sequence ID" value="AAD04376.1"/>
    <property type="molecule type" value="mRNA"/>
</dbReference>
<dbReference type="EMBL" id="AF089085">
    <property type="protein sequence ID" value="AAD04377.1"/>
    <property type="status" value="ALT_SEQ"/>
    <property type="molecule type" value="Genomic_DNA"/>
</dbReference>
<dbReference type="EMBL" id="AC079676">
    <property type="protein sequence ID" value="AAG51807.1"/>
    <property type="molecule type" value="Genomic_DNA"/>
</dbReference>
<dbReference type="EMBL" id="CP002684">
    <property type="protein sequence ID" value="AEE35479.1"/>
    <property type="molecule type" value="Genomic_DNA"/>
</dbReference>
<dbReference type="EMBL" id="AF372950">
    <property type="protein sequence ID" value="AAK50090.1"/>
    <property type="molecule type" value="mRNA"/>
</dbReference>
<dbReference type="EMBL" id="AY093960">
    <property type="protein sequence ID" value="AAM16221.1"/>
    <property type="molecule type" value="mRNA"/>
</dbReference>
<dbReference type="PIR" id="G96762">
    <property type="entry name" value="G96762"/>
</dbReference>
<dbReference type="RefSeq" id="NP_177500.1">
    <property type="nucleotide sequence ID" value="NM_106017.4"/>
</dbReference>
<dbReference type="PDB" id="7Y9T">
    <property type="method" value="EM"/>
    <property type="resolution" value="3.10 A"/>
    <property type="chains" value="A/B=1-622"/>
</dbReference>
<dbReference type="PDB" id="7Y9U">
    <property type="method" value="EM"/>
    <property type="resolution" value="3.30 A"/>
    <property type="chains" value="A/B=1-622"/>
</dbReference>
<dbReference type="PDB" id="7Y9V">
    <property type="method" value="EM"/>
    <property type="resolution" value="3.20 A"/>
    <property type="chains" value="A/B=1-622"/>
</dbReference>
<dbReference type="PDB" id="8JH5">
    <property type="method" value="EM"/>
    <property type="resolution" value="3.70 A"/>
    <property type="chains" value="A/B=1-622"/>
</dbReference>
<dbReference type="PDBsum" id="7Y9T"/>
<dbReference type="PDBsum" id="7Y9U"/>
<dbReference type="PDBsum" id="7Y9V"/>
<dbReference type="PDBsum" id="8JH5"/>
<dbReference type="EMDB" id="EMD-33691"/>
<dbReference type="EMDB" id="EMD-33692"/>
<dbReference type="EMDB" id="EMD-33693"/>
<dbReference type="EMDB" id="EMD-36254"/>
<dbReference type="SMR" id="Q9C6B8"/>
<dbReference type="BioGRID" id="28912">
    <property type="interactions" value="12"/>
</dbReference>
<dbReference type="DIP" id="DIP-40041N"/>
<dbReference type="FunCoup" id="Q9C6B8">
    <property type="interactions" value="28"/>
</dbReference>
<dbReference type="IntAct" id="Q9C6B8">
    <property type="interactions" value="6"/>
</dbReference>
<dbReference type="STRING" id="3702.Q9C6B8"/>
<dbReference type="TCDB" id="2.A.69.1.1">
    <property type="family name" value="the auxin efflux carrier (aec) family"/>
</dbReference>
<dbReference type="GlyCosmos" id="Q9C6B8">
    <property type="glycosylation" value="2 sites, No reported glycans"/>
</dbReference>
<dbReference type="GlyGen" id="Q9C6B8">
    <property type="glycosylation" value="2 sites"/>
</dbReference>
<dbReference type="iPTMnet" id="Q9C6B8"/>
<dbReference type="PaxDb" id="3702-AT1G73590.1"/>
<dbReference type="ProteomicsDB" id="234756"/>
<dbReference type="EnsemblPlants" id="AT1G73590.1">
    <property type="protein sequence ID" value="AT1G73590.1"/>
    <property type="gene ID" value="AT1G73590"/>
</dbReference>
<dbReference type="GeneID" id="843693"/>
<dbReference type="Gramene" id="AT1G73590.1">
    <property type="protein sequence ID" value="AT1G73590.1"/>
    <property type="gene ID" value="AT1G73590"/>
</dbReference>
<dbReference type="KEGG" id="ath:AT1G73590"/>
<dbReference type="Araport" id="AT1G73590"/>
<dbReference type="TAIR" id="AT1G73590">
    <property type="gene designation" value="PIN1"/>
</dbReference>
<dbReference type="eggNOG" id="ENOG502QRM7">
    <property type="taxonomic scope" value="Eukaryota"/>
</dbReference>
<dbReference type="HOGENOM" id="CLU_019285_1_1_1"/>
<dbReference type="InParanoid" id="Q9C6B8"/>
<dbReference type="OMA" id="CIDWAIT"/>
<dbReference type="OrthoDB" id="1868374at2759"/>
<dbReference type="PhylomeDB" id="Q9C6B8"/>
<dbReference type="PRO" id="PR:Q9C6B8"/>
<dbReference type="Proteomes" id="UP000006548">
    <property type="component" value="Chromosome 1"/>
</dbReference>
<dbReference type="ExpressionAtlas" id="Q9C6B8">
    <property type="expression patterns" value="baseline and differential"/>
</dbReference>
<dbReference type="GO" id="GO:0045177">
    <property type="term" value="C:apical part of cell"/>
    <property type="evidence" value="ECO:0000314"/>
    <property type="project" value="UniProtKB"/>
</dbReference>
<dbReference type="GO" id="GO:0016324">
    <property type="term" value="C:apical plasma membrane"/>
    <property type="evidence" value="ECO:0000314"/>
    <property type="project" value="UniProtKB"/>
</dbReference>
<dbReference type="GO" id="GO:0009925">
    <property type="term" value="C:basal plasma membrane"/>
    <property type="evidence" value="ECO:0000314"/>
    <property type="project" value="TAIR"/>
</dbReference>
<dbReference type="GO" id="GO:0071944">
    <property type="term" value="C:cell periphery"/>
    <property type="evidence" value="ECO:0000314"/>
    <property type="project" value="UniProtKB"/>
</dbReference>
<dbReference type="GO" id="GO:0005737">
    <property type="term" value="C:cytoplasm"/>
    <property type="evidence" value="ECO:0007005"/>
    <property type="project" value="TAIR"/>
</dbReference>
<dbReference type="GO" id="GO:0009505">
    <property type="term" value="C:plant-type cell wall"/>
    <property type="evidence" value="ECO:0000314"/>
    <property type="project" value="TAIR"/>
</dbReference>
<dbReference type="GO" id="GO:0005886">
    <property type="term" value="C:plasma membrane"/>
    <property type="evidence" value="ECO:0000314"/>
    <property type="project" value="UniProtKB"/>
</dbReference>
<dbReference type="GO" id="GO:0009506">
    <property type="term" value="C:plasmodesma"/>
    <property type="evidence" value="ECO:0007005"/>
    <property type="project" value="TAIR"/>
</dbReference>
<dbReference type="GO" id="GO:0010329">
    <property type="term" value="F:auxin efflux transmembrane transporter activity"/>
    <property type="evidence" value="ECO:0000314"/>
    <property type="project" value="UniProtKB"/>
</dbReference>
<dbReference type="GO" id="GO:0042802">
    <property type="term" value="F:identical protein binding"/>
    <property type="evidence" value="ECO:0000314"/>
    <property type="project" value="UniProtKB"/>
</dbReference>
<dbReference type="GO" id="GO:0042803">
    <property type="term" value="F:protein homodimerization activity"/>
    <property type="evidence" value="ECO:0000314"/>
    <property type="project" value="UniProtKB"/>
</dbReference>
<dbReference type="GO" id="GO:0010315">
    <property type="term" value="P:auxin export across the plasma membrane"/>
    <property type="evidence" value="ECO:0000314"/>
    <property type="project" value="UniProtKB"/>
</dbReference>
<dbReference type="GO" id="GO:0009926">
    <property type="term" value="P:auxin polar transport"/>
    <property type="evidence" value="ECO:0000315"/>
    <property type="project" value="TAIR"/>
</dbReference>
<dbReference type="GO" id="GO:0009734">
    <property type="term" value="P:auxin-activated signaling pathway"/>
    <property type="evidence" value="ECO:0007669"/>
    <property type="project" value="UniProtKB-KW"/>
</dbReference>
<dbReference type="GO" id="GO:0048825">
    <property type="term" value="P:cotyledon development"/>
    <property type="evidence" value="ECO:0000316"/>
    <property type="project" value="UniProtKB"/>
</dbReference>
<dbReference type="GO" id="GO:0048826">
    <property type="term" value="P:cotyledon morphogenesis"/>
    <property type="evidence" value="ECO:0000315"/>
    <property type="project" value="TAIR"/>
</dbReference>
<dbReference type="GO" id="GO:0009793">
    <property type="term" value="P:embryo development ending in seed dormancy"/>
    <property type="evidence" value="ECO:0000315"/>
    <property type="project" value="TAIR"/>
</dbReference>
<dbReference type="GO" id="GO:0009908">
    <property type="term" value="P:flower development"/>
    <property type="evidence" value="ECO:0000315"/>
    <property type="project" value="TAIR"/>
</dbReference>
<dbReference type="GO" id="GO:0009630">
    <property type="term" value="P:gravitropism"/>
    <property type="evidence" value="ECO:0000315"/>
    <property type="project" value="TAIR"/>
</dbReference>
<dbReference type="GO" id="GO:0010229">
    <property type="term" value="P:inflorescence development"/>
    <property type="evidence" value="ECO:0000315"/>
    <property type="project" value="TAIR"/>
</dbReference>
<dbReference type="GO" id="GO:0010338">
    <property type="term" value="P:leaf formation"/>
    <property type="evidence" value="ECO:0000316"/>
    <property type="project" value="TAIR"/>
</dbReference>
<dbReference type="GO" id="GO:0010358">
    <property type="term" value="P:leaf shaping"/>
    <property type="evidence" value="ECO:0000315"/>
    <property type="project" value="TAIR"/>
</dbReference>
<dbReference type="GO" id="GO:0009640">
    <property type="term" value="P:photomorphogenesis"/>
    <property type="evidence" value="ECO:0000304"/>
    <property type="project" value="TAIR"/>
</dbReference>
<dbReference type="GO" id="GO:0048364">
    <property type="term" value="P:root development"/>
    <property type="evidence" value="ECO:0000315"/>
    <property type="project" value="TAIR"/>
</dbReference>
<dbReference type="GO" id="GO:0048367">
    <property type="term" value="P:shoot system development"/>
    <property type="evidence" value="ECO:0000315"/>
    <property type="project" value="TAIR"/>
</dbReference>
<dbReference type="GO" id="GO:0010051">
    <property type="term" value="P:xylem and phloem pattern formation"/>
    <property type="evidence" value="ECO:0000315"/>
    <property type="project" value="TAIR"/>
</dbReference>
<dbReference type="InterPro" id="IPR014024">
    <property type="entry name" value="Auxin_eff_plant"/>
</dbReference>
<dbReference type="InterPro" id="IPR051107">
    <property type="entry name" value="Auxin_Efflux_Carrier"/>
</dbReference>
<dbReference type="InterPro" id="IPR004776">
    <property type="entry name" value="Mem_transp_PIN-like"/>
</dbReference>
<dbReference type="NCBIfam" id="TIGR00946">
    <property type="entry name" value="2a69"/>
    <property type="match status" value="1"/>
</dbReference>
<dbReference type="PANTHER" id="PTHR31752:SF18">
    <property type="entry name" value="AUXIN EFFLUX CARRIER COMPONENT 1"/>
    <property type="match status" value="1"/>
</dbReference>
<dbReference type="PANTHER" id="PTHR31752">
    <property type="entry name" value="AUXIN EFFLUX CARRIER COMPONENT 1B-RELATED"/>
    <property type="match status" value="1"/>
</dbReference>
<dbReference type="Pfam" id="PF03547">
    <property type="entry name" value="Mem_trans"/>
    <property type="match status" value="1"/>
</dbReference>
<accession>Q9C6B8</accession>
<accession>Q9ZSY5</accession>
<accession>Q9ZSY6</accession>
<organism>
    <name type="scientific">Arabidopsis thaliana</name>
    <name type="common">Mouse-ear cress</name>
    <dbReference type="NCBI Taxonomy" id="3702"/>
    <lineage>
        <taxon>Eukaryota</taxon>
        <taxon>Viridiplantae</taxon>
        <taxon>Streptophyta</taxon>
        <taxon>Embryophyta</taxon>
        <taxon>Tracheophyta</taxon>
        <taxon>Spermatophyta</taxon>
        <taxon>Magnoliopsida</taxon>
        <taxon>eudicotyledons</taxon>
        <taxon>Gunneridae</taxon>
        <taxon>Pentapetalae</taxon>
        <taxon>rosids</taxon>
        <taxon>malvids</taxon>
        <taxon>Brassicales</taxon>
        <taxon>Brassicaceae</taxon>
        <taxon>Camelineae</taxon>
        <taxon>Arabidopsis</taxon>
    </lineage>
</organism>
<name>PINI_ARATH</name>
<comment type="function">
    <text evidence="8 10 11 14 15">Acts as a component of the auxin efflux carrier; this activity is enhanced when activated by D6PK-mediated phosphorylation (PubMed:35917925). Binds auxins including indole-3-acetic acid (IAA), indole-3-butyric acid (IBA), indole-3-propionic acid (IPA) and 4-chloroindole-3-acetic acid (4-Cl-IAA) (PubMed:35917925). Seems to be involved in the basipetal auxin transport. Mediates the formation of auxin gradient which is required to ensure correct organogenesis. Coordinated polar localization of PIN1 is directly regulated by the vesicle trafficking process and apical-basal PIN1 polarity also depends on the phosphorylation of conserved serine residues by PID kinase. The ARF-GEF protein GNOM is required for the correct recycling of PIN1 between the plasma membrane and endosomal compartments. Recrutes NPY proteins (e.g. NPY1/MAB4 and NPY5/MEL1) to the plasma membrane in a polar basal localization in root epidermis; this activity is optimized by AGC kinases-mediated (e.g. D6PK and PID) phosphorylation that limits their lateral diffusion-based escape (PubMed:33705718).</text>
</comment>
<comment type="activity regulation">
    <text evidence="15">Auxin efflux carrier activity is competitively inhibited by naptalamate (N-1-naphthylphthalamic acid, NPA) but activated by D6PK-mediated phosphorylation.</text>
</comment>
<comment type="subunit">
    <text evidence="6 12 14 15">Homodimer (PubMed:35917925). Interacts with TOPP4 (PubMed:11574889). Interacts with FYPP1 and FYPP3 (PubMed:22715043). Component of a complex made of PINs (e.g. PIN1 and PIN2), MAB4/MELs (e.g. NPY1/MAB4 and NPY5/MEL1) and AGC kinases (e.g. D6PK and PID) at the plasma membrane (PubMed:33705718). Binds directly to NPY5/MEL1 (PubMed:33705718).</text>
</comment>
<comment type="interaction">
    <interactant intactId="EBI-1541799">
        <id>Q9C6B8</id>
    </interactant>
    <interactant intactId="EBI-371791">
        <id>Q9LJX0</id>
        <label>ABCB19</label>
    </interactant>
    <organismsDiffer>false</organismsDiffer>
    <experiments>7</experiments>
</comment>
<comment type="interaction">
    <interactant intactId="EBI-1541799">
        <id>Q9C6B8</id>
    </interactant>
    <interactant intactId="EBI-1393382">
        <id>O64682</id>
        <label>PID</label>
    </interactant>
    <organismsDiffer>false</organismsDiffer>
    <experiments>2</experiments>
</comment>
<comment type="subcellular location">
    <subcellularLocation>
        <location evidence="11 14">Cell membrane</location>
        <topology evidence="18">Multi-pass membrane protein</topology>
    </subcellularLocation>
    <text evidence="14">Localized the plasma membrane in a polar basal localization.</text>
</comment>
<comment type="tissue specificity">
    <text>Expressed at the basal side of elongated parenchymatous xylem cells.</text>
</comment>
<comment type="developmental stage">
    <text evidence="7">Expressed during embryogenesis. Already detected in the 8-cell stage at the inner cell boundaries. Later, polarity is gradually established at the basal side of provascular cells then in epidermis cells.</text>
</comment>
<comment type="induction">
    <text evidence="13">Down-regulated by endoplasmic reticulum stress treatment.</text>
</comment>
<comment type="disruption phenotype">
    <text evidence="16">Plants exhibit developed naked, pin-shaped inflorescences and abnormalities in the number, size, shape, and position of lateral organs.</text>
</comment>
<comment type="similarity">
    <text evidence="18">Belongs to the auxin efflux carrier (TC 2.A.69.1) family.</text>
</comment>
<comment type="sequence caution" evidence="18">
    <conflict type="erroneous gene model prediction">
        <sequence resource="EMBL-CDS" id="AAD04377"/>
    </conflict>
</comment>
<proteinExistence type="evidence at protein level"/>
<sequence length="622" mass="67019">MITAADFYHVMTAMVPLYVAMILAYGSVKWWKIFTPDQCSGINRFVALFAVPLLSFHFIAANNPYAMNLRFLAADSLQKVIVLSLLFLWCKLSRNGSLDWTITLFSLSTLPNTLVMGIPLLKGMYGNFSGDLMVQIVVLQCIIWYTLMLFLFEYRGAKLLISEQFPDTAGSIVSIHVDSDIMSLDGRQPLETEAEIKEDGKLHVTVRRSNASRSDIYSRRSQGLSATPRPSNLTNAEIYSLQSSRNPTPRGSSFNHTDFYSMMASGGGRNSNFGPGEAVFGSKGPTPRPSNYEEDGGPAKPTAAGTAAGAGRFHYQSGGSGGGGGAHYPAPNPGMFSPNTGGGGGTAAKGNAPVVGGKRQDGNGRDLHMFVWSSSASPVSDVFGGGGGNHHADYSTATNDHQKDVKISVPQGNSNDNQYVEREEFSFGNKDDDSKVLATDGGNNISNKTTQAKVMPPTSVMTRLILIMVWRKLIRNPNSYSSLFGITWSLISFKWNIEMPALIAKSISILSDAGLGMAMFSLGLFMALNPRIIACGNRRAAFAAAMRFVVGPAVMLVASYAVGLRGVLLHVAIIQAALPQGIVPFVFAKEYNVHPDILSTAVIFGMLIALPITLLYYILLGL</sequence>
<keyword id="KW-0002">3D-structure</keyword>
<keyword id="KW-0927">Auxin signaling pathway</keyword>
<keyword id="KW-1003">Cell membrane</keyword>
<keyword id="KW-0325">Glycoprotein</keyword>
<keyword id="KW-0472">Membrane</keyword>
<keyword id="KW-0597">Phosphoprotein</keyword>
<keyword id="KW-1185">Reference proteome</keyword>
<keyword id="KW-0812">Transmembrane</keyword>
<keyword id="KW-1133">Transmembrane helix</keyword>
<keyword id="KW-0813">Transport</keyword>
<evidence type="ECO:0000250" key="1">
    <source>
        <dbReference type="UniProtKB" id="Q9LFP6"/>
    </source>
</evidence>
<evidence type="ECO:0000250" key="2">
    <source>
        <dbReference type="UniProtKB" id="Q9S7Z8"/>
    </source>
</evidence>
<evidence type="ECO:0000255" key="3"/>
<evidence type="ECO:0000255" key="4">
    <source>
        <dbReference type="PROSITE-ProRule" id="PRU00498"/>
    </source>
</evidence>
<evidence type="ECO:0000256" key="5">
    <source>
        <dbReference type="SAM" id="MobiDB-lite"/>
    </source>
</evidence>
<evidence type="ECO:0000269" key="6">
    <source>
    </source>
</evidence>
<evidence type="ECO:0000269" key="7">
    <source>
    </source>
</evidence>
<evidence type="ECO:0000269" key="8">
    <source>
    </source>
</evidence>
<evidence type="ECO:0000269" key="9">
    <source>
    </source>
</evidence>
<evidence type="ECO:0000269" key="10">
    <source>
    </source>
</evidence>
<evidence type="ECO:0000269" key="11">
    <source>
    </source>
</evidence>
<evidence type="ECO:0000269" key="12">
    <source>
    </source>
</evidence>
<evidence type="ECO:0000269" key="13">
    <source>
    </source>
</evidence>
<evidence type="ECO:0000269" key="14">
    <source>
    </source>
</evidence>
<evidence type="ECO:0000269" key="15">
    <source>
    </source>
</evidence>
<evidence type="ECO:0000269" key="16">
    <source>
    </source>
</evidence>
<evidence type="ECO:0000303" key="17">
    <source>
    </source>
</evidence>
<evidence type="ECO:0000305" key="18"/>
<evidence type="ECO:0000305" key="19">
    <source>
    </source>
</evidence>
<evidence type="ECO:0000312" key="20">
    <source>
        <dbReference type="Araport" id="AT1G73590"/>
    </source>
</evidence>
<evidence type="ECO:0000312" key="21">
    <source>
        <dbReference type="EMBL" id="AAG51807.1"/>
    </source>
</evidence>
<evidence type="ECO:0007744" key="22">
    <source>
        <dbReference type="PDB" id="7Y9T"/>
    </source>
</evidence>
<evidence type="ECO:0007744" key="23">
    <source>
        <dbReference type="PDB" id="7Y9U"/>
    </source>
</evidence>
<evidence type="ECO:0007744" key="24">
    <source>
        <dbReference type="PDB" id="7Y9V"/>
    </source>
</evidence>
<evidence type="ECO:0007829" key="25">
    <source>
        <dbReference type="PDB" id="7Y9T"/>
    </source>
</evidence>
<evidence type="ECO:0007829" key="26">
    <source>
        <dbReference type="PDB" id="7Y9V"/>
    </source>
</evidence>
<feature type="chain" id="PRO_0000123780" description="Auxin efflux carrier component 1">
    <location>
        <begin position="1"/>
        <end position="622"/>
    </location>
</feature>
<feature type="topological domain" description="Extracellular" evidence="19">
    <location>
        <begin position="1"/>
        <end position="6"/>
    </location>
</feature>
<feature type="transmembrane region" description="Helical; Name=1" evidence="3">
    <location>
        <begin position="7"/>
        <end position="27"/>
    </location>
</feature>
<feature type="topological domain" description="Cytoplasmic" evidence="19">
    <location>
        <begin position="28"/>
        <end position="44"/>
    </location>
</feature>
<feature type="transmembrane region" description="Helical; Name=2" evidence="3">
    <location>
        <begin position="45"/>
        <end position="65"/>
    </location>
</feature>
<feature type="topological domain" description="Extracellular" evidence="19">
    <location>
        <begin position="66"/>
        <end position="70"/>
    </location>
</feature>
<feature type="transmembrane region" description="Helical; Name=3" evidence="3">
    <location>
        <begin position="71"/>
        <end position="91"/>
    </location>
</feature>
<feature type="topological domain" description="Cytoplasmic" evidence="19">
    <location>
        <begin position="92"/>
        <end position="100"/>
    </location>
</feature>
<feature type="transmembrane region" description="Helical; Name=4" evidence="3">
    <location>
        <begin position="101"/>
        <end position="121"/>
    </location>
</feature>
<feature type="topological domain" description="Extracellular" evidence="19">
    <location>
        <begin position="122"/>
        <end position="131"/>
    </location>
</feature>
<feature type="transmembrane region" description="Helical; Name=5" evidence="3">
    <location>
        <begin position="132"/>
        <end position="152"/>
    </location>
</feature>
<feature type="topological domain" description="Cytoplasmic" evidence="19">
    <location>
        <begin position="153"/>
        <end position="482"/>
    </location>
</feature>
<feature type="transmembrane region" description="Helical; Name=6" evidence="3">
    <location>
        <begin position="483"/>
        <end position="503"/>
    </location>
</feature>
<feature type="topological domain" description="Extracellular" evidence="19">
    <location>
        <begin position="504"/>
        <end position="506"/>
    </location>
</feature>
<feature type="transmembrane region" description="Helical; Name=7" evidence="3">
    <location>
        <begin position="507"/>
        <end position="527"/>
    </location>
</feature>
<feature type="topological domain" description="Cytoplasmic" evidence="19">
    <location>
        <begin position="528"/>
        <end position="541"/>
    </location>
</feature>
<feature type="transmembrane region" description="Helical; Name=8" evidence="3">
    <location>
        <begin position="542"/>
        <end position="562"/>
    </location>
</feature>
<feature type="topological domain" description="Extracellular" evidence="19">
    <location>
        <begin position="563"/>
        <end position="566"/>
    </location>
</feature>
<feature type="transmembrane region" description="Helical; Name=9" evidence="3">
    <location>
        <begin position="567"/>
        <end position="587"/>
    </location>
</feature>
<feature type="topological domain" description="Cytoplasmic" evidence="19">
    <location>
        <begin position="588"/>
        <end position="601"/>
    </location>
</feature>
<feature type="transmembrane region" description="Helical; Name=10" evidence="3">
    <location>
        <begin position="602"/>
        <end position="622"/>
    </location>
</feature>
<feature type="region of interest" description="Disordered" evidence="5">
    <location>
        <begin position="213"/>
        <end position="233"/>
    </location>
</feature>
<feature type="region of interest" description="Disordered" evidence="5">
    <location>
        <begin position="268"/>
        <end position="362"/>
    </location>
</feature>
<feature type="compositionally biased region" description="Low complexity" evidence="5">
    <location>
        <begin position="298"/>
        <end position="311"/>
    </location>
</feature>
<feature type="binding site" evidence="15 24">
    <location>
        <position position="51"/>
    </location>
    <ligand>
        <name>(indol-3-yl)acetate</name>
        <dbReference type="ChEBI" id="CHEBI:30854"/>
    </ligand>
</feature>
<feature type="binding site" evidence="15 24">
    <location>
        <position position="112"/>
    </location>
    <ligand>
        <name>(indol-3-yl)acetate</name>
        <dbReference type="ChEBI" id="CHEBI:30854"/>
    </ligand>
</feature>
<feature type="binding site" evidence="1">
    <location>
        <position position="114"/>
    </location>
    <ligand>
        <name>(indol-3-yl)acetate</name>
        <dbReference type="ChEBI" id="CHEBI:30854"/>
    </ligand>
</feature>
<feature type="binding site" evidence="1">
    <location>
        <position position="145"/>
    </location>
    <ligand>
        <name>(indol-3-yl)acetate</name>
        <dbReference type="ChEBI" id="CHEBI:30854"/>
    </ligand>
</feature>
<feature type="binding site" evidence="15 24">
    <location>
        <position position="582"/>
    </location>
    <ligand>
        <name>(indol-3-yl)acetate</name>
        <dbReference type="ChEBI" id="CHEBI:30854"/>
    </ligand>
</feature>
<feature type="binding site" evidence="1">
    <location>
        <position position="583"/>
    </location>
    <ligand>
        <name>(indol-3-yl)acetate</name>
        <dbReference type="ChEBI" id="CHEBI:30854"/>
    </ligand>
</feature>
<feature type="modified residue" description="Phosphoserine" evidence="15">
    <location>
        <position position="209"/>
    </location>
</feature>
<feature type="modified residue" description="Phosphoserine" evidence="15">
    <location>
        <position position="212"/>
    </location>
</feature>
<feature type="modified residue" description="Phosphoserine" evidence="15">
    <location>
        <position position="221"/>
    </location>
</feature>
<feature type="modified residue" description="Phosphoserine" evidence="15">
    <location>
        <position position="225"/>
    </location>
</feature>
<feature type="modified residue" description="Phosphothreonine" evidence="15">
    <location>
        <position position="227"/>
    </location>
</feature>
<feature type="modified residue" description="Phosphoserine" evidence="10 15">
    <location>
        <position position="231"/>
    </location>
</feature>
<feature type="modified residue" description="Phosphothreonine" evidence="15">
    <location>
        <position position="248"/>
    </location>
</feature>
<feature type="modified residue" description="Phosphoserine" evidence="10 15">
    <location>
        <position position="252"/>
    </location>
</feature>
<feature type="modified residue" description="Phosphoserine" evidence="15">
    <location>
        <position position="253"/>
    </location>
</feature>
<feature type="modified residue" description="Phosphoserine" evidence="15">
    <location>
        <position position="271"/>
    </location>
</feature>
<feature type="modified residue" description="Phosphothreonine" evidence="15">
    <location>
        <position position="286"/>
    </location>
</feature>
<feature type="modified residue" description="Phosphoserine" evidence="10 15">
    <location>
        <position position="290"/>
    </location>
</feature>
<feature type="modified residue" description="Phosphothreonine" evidence="15">
    <location>
        <position position="302"/>
    </location>
</feature>
<feature type="modified residue" description="Phosphoserine" evidence="15">
    <location>
        <position position="317"/>
    </location>
</feature>
<feature type="modified residue" description="Phosphoserine" evidence="15">
    <location>
        <position position="320"/>
    </location>
</feature>
<feature type="modified residue" description="Phosphoserine" evidence="9 15">
    <location>
        <position position="337"/>
    </location>
</feature>
<feature type="modified residue" description="Phosphothreonine" evidence="9">
    <location>
        <position position="340"/>
    </location>
</feature>
<feature type="modified residue" description="Phosphoserine" evidence="15">
    <location>
        <position position="374"/>
    </location>
</feature>
<feature type="modified residue" description="Phosphoserine" evidence="2">
    <location>
        <position position="377"/>
    </location>
</feature>
<feature type="modified residue" description="Phosphoserine" evidence="15">
    <location>
        <position position="408"/>
    </location>
</feature>
<feature type="modified residue" description="Phosphoserine" evidence="15">
    <location>
        <position position="414"/>
    </location>
</feature>
<feature type="modified residue" description="Phosphoserine" evidence="15">
    <location>
        <position position="426"/>
    </location>
</feature>
<feature type="modified residue" description="Phosphoserine" evidence="15">
    <location>
        <position position="434"/>
    </location>
</feature>
<feature type="modified residue" description="Phosphoserine" evidence="15">
    <location>
        <position position="446"/>
    </location>
</feature>
<feature type="glycosylation site" description="N-linked (GlcNAc...) asparagine" evidence="4">
    <location>
        <position position="127"/>
    </location>
</feature>
<feature type="mutagenesis site" description="Strongly reduced ability to bind auxin (e.g. IAA) and impaired auxin efflux carrier activity." evidence="15">
    <original>V</original>
    <variation>A</variation>
    <location>
        <position position="51"/>
    </location>
</feature>
<feature type="mutagenesis site" description="Lost ability to bind auxin (e.g. IAA) and impaired auxin efflux carrier activity." evidence="15">
    <original>N</original>
    <variation>A</variation>
    <location>
        <position position="112"/>
    </location>
</feature>
<feature type="mutagenesis site" description="Strongly reduced ability to bind auxin (e.g. IAA) and impaired auxin (e.g. IAA) efflux carrier activity." evidence="15">
    <original>Y</original>
    <variation>A</variation>
    <location>
        <position position="145"/>
    </location>
</feature>
<feature type="mutagenesis site" description="Reduced auxin (e.g. IAA) efflux carrier activity." evidence="15">
    <original>R</original>
    <variation>A</variation>
    <location>
        <position position="187"/>
    </location>
</feature>
<feature type="mutagenesis site" description="Non-phosphorylatable, slightly decreased auxin transport activity; when associated with A-248 and A-286." evidence="15">
    <original>T</original>
    <variation>A</variation>
    <location>
        <position position="227"/>
    </location>
</feature>
<feature type="mutagenesis site" description="Phosphomimetic, normal auxin transport activity; when associated with D-248 and D-286." evidence="15">
    <original>T</original>
    <variation>D</variation>
    <location>
        <position position="227"/>
    </location>
</feature>
<feature type="mutagenesis site" description="Apical-to-basal shift in polar targeting, lost ability to recruit NPY1/MAB4 and NPY5/MEL1 to the plasma membrane, and increased auxin accumulation in the root tips; when associated with A-252 and A-290. Non-phosphorylatable, slightly decreased auxin transport activity; when associated with A-252; A-271 and A-290." evidence="10 14 15">
    <original>S</original>
    <variation>A</variation>
    <location>
        <position position="231"/>
    </location>
</feature>
<feature type="mutagenesis site" description="Phosphomimetic, normal auxin transport activity; when associated with D-252; D-271 and D-290." evidence="15">
    <original>S</original>
    <variation>D</variation>
    <location>
        <position position="231"/>
    </location>
</feature>
<feature type="mutagenesis site" description="Non-phosphorylatable, slightly decreased auxin transport activity; when associated with A-227 and A-286." evidence="15">
    <original>T</original>
    <variation>A</variation>
    <location>
        <position position="248"/>
    </location>
</feature>
<feature type="mutagenesis site" description="Phosphomimetic, normal auxin transport activity; when associated with D-227 and D-286." evidence="15">
    <original>T</original>
    <variation>D</variation>
    <location>
        <position position="248"/>
    </location>
</feature>
<feature type="mutagenesis site" description="Apical-to-basal shift in polar targeting, lost ability to recruit NPY1/MAB4 and NPY5/MEL1 to the plasma membrane, and increased auxin accumulation in the root tips; when associated with A-231 and A-290. Non-phosphorylatable, slightly decreased auxin transport activity; when associated with A-231; A-271 and A-290." evidence="10 14 15">
    <original>S</original>
    <variation>A</variation>
    <location>
        <position position="252"/>
    </location>
</feature>
<feature type="mutagenesis site" description="Phosphomimetic, normal auxin transport activity; when associated with D-231; D-271 and D-290." evidence="15">
    <original>S</original>
    <variation>D</variation>
    <location>
        <position position="252"/>
    </location>
</feature>
<feature type="mutagenesis site" description="Non-phosphorylatable, slightly decreased auxin transport activity; when associated with A-231; A-252 and A-290." evidence="15">
    <original>S</original>
    <variation>A</variation>
    <location>
        <position position="271"/>
    </location>
</feature>
<feature type="mutagenesis site" description="Phosphomimetic, normal auxin transport activity; when associated with D-231; D-252 and D-290." evidence="15">
    <original>S</original>
    <variation>D</variation>
    <location>
        <position position="271"/>
    </location>
</feature>
<feature type="mutagenesis site" description="Non-phosphorylatable, slightly decreased auxin transport activity; when associated with A-227 and A-248." evidence="15">
    <original>T</original>
    <variation>A</variation>
    <location>
        <position position="286"/>
    </location>
</feature>
<feature type="mutagenesis site" description="Phosphomimetic, normal auxin transport activity; when associated with D-227 and D-248." evidence="15">
    <original>T</original>
    <variation>D</variation>
    <location>
        <position position="286"/>
    </location>
</feature>
<feature type="mutagenesis site" description="Apical-to-basal shift in polar targeting, lost ability to recruit NPY1/MAB4 and NPY5/MEL1 to the plasma membrane, and increased auxin accumulation in the root tips; when associated with A-231 and A-252. Non-phosphorylatable, slightly decreased auxin transport activity; when associated with A-231; A-252 and A-271." evidence="10 14 15">
    <original>S</original>
    <variation>A</variation>
    <location>
        <position position="290"/>
    </location>
</feature>
<feature type="mutagenesis site" description="Phosphomimetic, normal auxin transport activity; when associated with D-231; D-252 and D-271." evidence="15">
    <original>S</original>
    <variation>D</variation>
    <location>
        <position position="290"/>
    </location>
</feature>
<feature type="mutagenesis site" description="Impaired auxin (e.g. IAA) efflux carrier activity." evidence="15">
    <original>K</original>
    <variation>A</variation>
    <location>
        <position position="472"/>
    </location>
</feature>
<feature type="mutagenesis site" description="Impaired auxin (e.g. IAA) efflux carrier activity." evidence="15">
    <original>R</original>
    <variation>A</variation>
    <location>
        <position position="547"/>
    </location>
</feature>
<feature type="mutagenesis site" description="Lost auxin (e.g. IAA) efflux carrier activity." evidence="15">
    <original>Q</original>
    <variation>A</variation>
    <location>
        <position position="580"/>
    </location>
</feature>
<feature type="mutagenesis site" description="Lost ability to bind auxin (e.g. IAA) and impaired auxin (e.g. IAA) efflux carrier activity." evidence="15">
    <original>I</original>
    <variation>A</variation>
    <location>
        <position position="582"/>
    </location>
</feature>
<feature type="sequence conflict" description="In Ref. 1; AAD04376." evidence="18" ref="1">
    <original>T</original>
    <variation>I</variation>
    <location>
        <position position="146"/>
    </location>
</feature>
<feature type="helix" evidence="25">
    <location>
        <begin position="6"/>
        <end position="29"/>
    </location>
</feature>
<feature type="helix" evidence="25">
    <location>
        <begin position="36"/>
        <end position="48"/>
    </location>
</feature>
<feature type="helix" evidence="25">
    <location>
        <begin position="50"/>
        <end position="59"/>
    </location>
</feature>
<feature type="turn" evidence="25">
    <location>
        <begin position="69"/>
        <end position="77"/>
    </location>
</feature>
<feature type="helix" evidence="25">
    <location>
        <begin position="78"/>
        <end position="85"/>
    </location>
</feature>
<feature type="turn" evidence="25">
    <location>
        <begin position="86"/>
        <end position="88"/>
    </location>
</feature>
<feature type="helix" evidence="25">
    <location>
        <begin position="89"/>
        <end position="92"/>
    </location>
</feature>
<feature type="helix" evidence="25">
    <location>
        <begin position="99"/>
        <end position="103"/>
    </location>
</feature>
<feature type="turn" evidence="25">
    <location>
        <begin position="104"/>
        <end position="108"/>
    </location>
</feature>
<feature type="turn" evidence="25">
    <location>
        <begin position="113"/>
        <end position="116"/>
    </location>
</feature>
<feature type="helix" evidence="25">
    <location>
        <begin position="117"/>
        <end position="125"/>
    </location>
</feature>
<feature type="helix" evidence="25">
    <location>
        <begin position="129"/>
        <end position="142"/>
    </location>
</feature>
<feature type="turn" evidence="25">
    <location>
        <begin position="143"/>
        <end position="146"/>
    </location>
</feature>
<feature type="helix" evidence="25">
    <location>
        <begin position="147"/>
        <end position="156"/>
    </location>
</feature>
<feature type="helix" evidence="25">
    <location>
        <begin position="158"/>
        <end position="164"/>
    </location>
</feature>
<feature type="turn" evidence="25">
    <location>
        <begin position="166"/>
        <end position="168"/>
    </location>
</feature>
<feature type="helix" evidence="25">
    <location>
        <begin position="169"/>
        <end position="171"/>
    </location>
</feature>
<feature type="strand" evidence="25">
    <location>
        <begin position="172"/>
        <end position="177"/>
    </location>
</feature>
<feature type="strand" evidence="26">
    <location>
        <begin position="185"/>
        <end position="188"/>
    </location>
</feature>
<feature type="strand" evidence="25">
    <location>
        <begin position="191"/>
        <end position="196"/>
    </location>
</feature>
<feature type="strand" evidence="25">
    <location>
        <begin position="198"/>
        <end position="200"/>
    </location>
</feature>
<feature type="strand" evidence="25">
    <location>
        <begin position="202"/>
        <end position="207"/>
    </location>
</feature>
<feature type="turn" evidence="25">
    <location>
        <begin position="458"/>
        <end position="460"/>
    </location>
</feature>
<feature type="helix" evidence="25">
    <location>
        <begin position="461"/>
        <end position="470"/>
    </location>
</feature>
<feature type="turn" evidence="25">
    <location>
        <begin position="471"/>
        <end position="473"/>
    </location>
</feature>
<feature type="helix" evidence="25">
    <location>
        <begin position="477"/>
        <end position="479"/>
    </location>
</feature>
<feature type="helix" evidence="25">
    <location>
        <begin position="480"/>
        <end position="495"/>
    </location>
</feature>
<feature type="helix" evidence="25">
    <location>
        <begin position="501"/>
        <end position="511"/>
    </location>
</feature>
<feature type="helix" evidence="25">
    <location>
        <begin position="514"/>
        <end position="528"/>
    </location>
</feature>
<feature type="helix" evidence="25">
    <location>
        <begin position="537"/>
        <end position="543"/>
    </location>
</feature>
<feature type="helix" evidence="25">
    <location>
        <begin position="545"/>
        <end position="548"/>
    </location>
</feature>
<feature type="turn" evidence="25">
    <location>
        <begin position="549"/>
        <end position="553"/>
    </location>
</feature>
<feature type="helix" evidence="25">
    <location>
        <begin position="554"/>
        <end position="562"/>
    </location>
</feature>
<feature type="helix" evidence="25">
    <location>
        <begin position="567"/>
        <end position="572"/>
    </location>
</feature>
<feature type="helix" evidence="25">
    <location>
        <begin position="583"/>
        <end position="590"/>
    </location>
</feature>
<feature type="turn" evidence="25">
    <location>
        <begin position="595"/>
        <end position="602"/>
    </location>
</feature>
<feature type="helix" evidence="25">
    <location>
        <begin position="603"/>
        <end position="607"/>
    </location>
</feature>
<feature type="helix" evidence="25">
    <location>
        <begin position="610"/>
        <end position="620"/>
    </location>
</feature>